<protein>
    <recommendedName>
        <fullName evidence="1">NAD(P)H-quinone oxidoreductase subunit 2, chloroplastic</fullName>
        <ecNumber evidence="1">7.1.1.-</ecNumber>
    </recommendedName>
    <alternativeName>
        <fullName evidence="1">NAD(P)H dehydrogenase, subunit 2</fullName>
    </alternativeName>
    <alternativeName>
        <fullName evidence="1">NADH-plastoquinone oxidoreductase subunit 2</fullName>
    </alternativeName>
</protein>
<sequence length="501" mass="56190">MKLELDMFFLYGSTILPECILIFSLLIILIIDLTFPKKDTIWLYFISLTSLLISIIILLFQYKTDPIISFLGSFQTDSFNRIFQSFIVFCSILCIPLSIEYIKCAKMAIPEFLIFILTATVGGMFLCGANDLVTIFVSLECLSLCSYLLCGYTKRDIRSNEAAIKYLLIGGTSSSILAYGFSWLYGLSGGETNIQKITNGLLNAETYNSSGTFIAFICILVGLAFKLSLVPFHQWTPDIYEGSPTPVVAFLSVTSKIAGLALATRILNILFSFSPNEWKIFLEILAILSMILGNLVAITQTSMKRMLAYSSISQIGYILIGLITGDLKGYTSMTIYVFFYIFMNLGTFACIILYSLRTGTDNIRDYAGLYIKDPLLSFSLTLCLLSLGGLPPLTGFFGKLYLFWCGWQSGFYLLVFIALITSVISLYYYLKIIKLILTKKNNEINPYIQAYIITSPTFFSKNPIEFVMIFCVLGSTFLGIIINPIFSFFQDSLSLSVFFIK</sequence>
<comment type="function">
    <text evidence="1">NDH shuttles electrons from NAD(P)H:plastoquinone, via FMN and iron-sulfur (Fe-S) centers, to quinones in the photosynthetic chain and possibly in a chloroplast respiratory chain. The immediate electron acceptor for the enzyme in this species is believed to be plastoquinone. Couples the redox reaction to proton translocation, and thus conserves the redox energy in a proton gradient.</text>
</comment>
<comment type="catalytic activity">
    <reaction evidence="1">
        <text>a plastoquinone + NADH + (n+1) H(+)(in) = a plastoquinol + NAD(+) + n H(+)(out)</text>
        <dbReference type="Rhea" id="RHEA:42608"/>
        <dbReference type="Rhea" id="RHEA-COMP:9561"/>
        <dbReference type="Rhea" id="RHEA-COMP:9562"/>
        <dbReference type="ChEBI" id="CHEBI:15378"/>
        <dbReference type="ChEBI" id="CHEBI:17757"/>
        <dbReference type="ChEBI" id="CHEBI:57540"/>
        <dbReference type="ChEBI" id="CHEBI:57945"/>
        <dbReference type="ChEBI" id="CHEBI:62192"/>
    </reaction>
</comment>
<comment type="catalytic activity">
    <reaction evidence="1">
        <text>a plastoquinone + NADPH + (n+1) H(+)(in) = a plastoquinol + NADP(+) + n H(+)(out)</text>
        <dbReference type="Rhea" id="RHEA:42612"/>
        <dbReference type="Rhea" id="RHEA-COMP:9561"/>
        <dbReference type="Rhea" id="RHEA-COMP:9562"/>
        <dbReference type="ChEBI" id="CHEBI:15378"/>
        <dbReference type="ChEBI" id="CHEBI:17757"/>
        <dbReference type="ChEBI" id="CHEBI:57783"/>
        <dbReference type="ChEBI" id="CHEBI:58349"/>
        <dbReference type="ChEBI" id="CHEBI:62192"/>
    </reaction>
</comment>
<comment type="subunit">
    <text evidence="1">NDH is composed of at least 16 different subunits, 5 of which are encoded in the nucleus.</text>
</comment>
<comment type="subcellular location">
    <subcellularLocation>
        <location evidence="1">Plastid</location>
        <location evidence="1">Chloroplast thylakoid membrane</location>
        <topology evidence="1">Multi-pass membrane protein</topology>
    </subcellularLocation>
</comment>
<comment type="similarity">
    <text evidence="1">Belongs to the complex I subunit 2 family.</text>
</comment>
<geneLocation type="chloroplast"/>
<reference key="1">
    <citation type="journal article" date="1986" name="Nature">
        <title>Chloroplast gene organization deduced from complete sequence of liverwort Marchantia polymorpha chloroplast DNA.</title>
        <authorList>
            <person name="Ohyama K."/>
            <person name="Fukuzawa H."/>
            <person name="Kohchi T."/>
            <person name="Shirai H."/>
            <person name="Sano T."/>
            <person name="Sano S."/>
            <person name="Umesono K."/>
            <person name="Shiki Y."/>
            <person name="Takeuchi M."/>
            <person name="Chang Z."/>
            <person name="Aota S."/>
            <person name="Inokuchi H."/>
            <person name="Ozeki H."/>
        </authorList>
    </citation>
    <scope>NUCLEOTIDE SEQUENCE [LARGE SCALE GENOMIC DNA]</scope>
</reference>
<reference key="2">
    <citation type="journal article" date="1988" name="J. Mol. Biol.">
        <title>Structure and organization of Marchantia polymorpha chloroplast genome. II. Gene organization of the large single copy region from rps'12 to atpB.</title>
        <authorList>
            <person name="Umesono K."/>
            <person name="Inokuchi H."/>
            <person name="Shiki Y."/>
            <person name="Takeuchi M."/>
            <person name="Chang Z."/>
            <person name="Fukuzawa H."/>
            <person name="Kohchi T."/>
            <person name="Shirai H."/>
            <person name="Ohyama K."/>
            <person name="Ozeki H."/>
        </authorList>
    </citation>
    <scope>NUCLEOTIDE SEQUENCE [GENOMIC DNA]</scope>
</reference>
<accession>P06257</accession>
<gene>
    <name evidence="1" type="primary">ndhB</name>
    <name type="synonym">ndh2</name>
</gene>
<evidence type="ECO:0000255" key="1">
    <source>
        <dbReference type="HAMAP-Rule" id="MF_00445"/>
    </source>
</evidence>
<dbReference type="EC" id="7.1.1.-" evidence="1"/>
<dbReference type="EMBL" id="X04465">
    <property type="protein sequence ID" value="CAA28058.1"/>
    <property type="molecule type" value="Genomic_DNA"/>
</dbReference>
<dbReference type="PIR" id="S01569">
    <property type="entry name" value="DELVN2"/>
</dbReference>
<dbReference type="RefSeq" id="NP_039272.1">
    <property type="nucleotide sequence ID" value="NC_001319.1"/>
</dbReference>
<dbReference type="SMR" id="P06257"/>
<dbReference type="GeneID" id="2702532"/>
<dbReference type="GO" id="GO:0009535">
    <property type="term" value="C:chloroplast thylakoid membrane"/>
    <property type="evidence" value="ECO:0007669"/>
    <property type="project" value="UniProtKB-SubCell"/>
</dbReference>
<dbReference type="GO" id="GO:0008137">
    <property type="term" value="F:NADH dehydrogenase (ubiquinone) activity"/>
    <property type="evidence" value="ECO:0007669"/>
    <property type="project" value="InterPro"/>
</dbReference>
<dbReference type="GO" id="GO:0048038">
    <property type="term" value="F:quinone binding"/>
    <property type="evidence" value="ECO:0007669"/>
    <property type="project" value="UniProtKB-KW"/>
</dbReference>
<dbReference type="GO" id="GO:0042773">
    <property type="term" value="P:ATP synthesis coupled electron transport"/>
    <property type="evidence" value="ECO:0007669"/>
    <property type="project" value="InterPro"/>
</dbReference>
<dbReference type="GO" id="GO:0019684">
    <property type="term" value="P:photosynthesis, light reaction"/>
    <property type="evidence" value="ECO:0007669"/>
    <property type="project" value="UniProtKB-UniRule"/>
</dbReference>
<dbReference type="HAMAP" id="MF_00445">
    <property type="entry name" value="NDH1_NuoN_1"/>
    <property type="match status" value="1"/>
</dbReference>
<dbReference type="InterPro" id="IPR010096">
    <property type="entry name" value="NADH-Q_OxRdtase_suN/2"/>
</dbReference>
<dbReference type="InterPro" id="IPR001750">
    <property type="entry name" value="ND/Mrp_TM"/>
</dbReference>
<dbReference type="InterPro" id="IPR045693">
    <property type="entry name" value="Ndh2_N"/>
</dbReference>
<dbReference type="NCBIfam" id="TIGR01770">
    <property type="entry name" value="NDH_I_N"/>
    <property type="match status" value="1"/>
</dbReference>
<dbReference type="NCBIfam" id="NF002701">
    <property type="entry name" value="PRK02504.1"/>
    <property type="match status" value="1"/>
</dbReference>
<dbReference type="PANTHER" id="PTHR22773">
    <property type="entry name" value="NADH DEHYDROGENASE"/>
    <property type="match status" value="1"/>
</dbReference>
<dbReference type="Pfam" id="PF19530">
    <property type="entry name" value="Ndh2_N"/>
    <property type="match status" value="1"/>
</dbReference>
<dbReference type="Pfam" id="PF00361">
    <property type="entry name" value="Proton_antipo_M"/>
    <property type="match status" value="1"/>
</dbReference>
<dbReference type="PRINTS" id="PR01434">
    <property type="entry name" value="NADHDHGNASE5"/>
</dbReference>
<proteinExistence type="inferred from homology"/>
<organism>
    <name type="scientific">Marchantia polymorpha</name>
    <name type="common">Common liverwort</name>
    <name type="synonym">Marchantia aquatica</name>
    <dbReference type="NCBI Taxonomy" id="3197"/>
    <lineage>
        <taxon>Eukaryota</taxon>
        <taxon>Viridiplantae</taxon>
        <taxon>Streptophyta</taxon>
        <taxon>Embryophyta</taxon>
        <taxon>Marchantiophyta</taxon>
        <taxon>Marchantiopsida</taxon>
        <taxon>Marchantiidae</taxon>
        <taxon>Marchantiales</taxon>
        <taxon>Marchantiaceae</taxon>
        <taxon>Marchantia</taxon>
    </lineage>
</organism>
<name>NU2C_MARPO</name>
<keyword id="KW-0150">Chloroplast</keyword>
<keyword id="KW-0472">Membrane</keyword>
<keyword id="KW-0520">NAD</keyword>
<keyword id="KW-0521">NADP</keyword>
<keyword id="KW-0934">Plastid</keyword>
<keyword id="KW-0618">Plastoquinone</keyword>
<keyword id="KW-0874">Quinone</keyword>
<keyword id="KW-0793">Thylakoid</keyword>
<keyword id="KW-1278">Translocase</keyword>
<keyword id="KW-0812">Transmembrane</keyword>
<keyword id="KW-1133">Transmembrane helix</keyword>
<keyword id="KW-0813">Transport</keyword>
<feature type="chain" id="PRO_0000117665" description="NAD(P)H-quinone oxidoreductase subunit 2, chloroplastic">
    <location>
        <begin position="1"/>
        <end position="501"/>
    </location>
</feature>
<feature type="transmembrane region" description="Helical" evidence="1">
    <location>
        <begin position="15"/>
        <end position="35"/>
    </location>
</feature>
<feature type="transmembrane region" description="Helical" evidence="1">
    <location>
        <begin position="40"/>
        <end position="60"/>
    </location>
</feature>
<feature type="transmembrane region" description="Helical" evidence="1">
    <location>
        <begin position="82"/>
        <end position="102"/>
    </location>
</feature>
<feature type="transmembrane region" description="Helical" evidence="1">
    <location>
        <begin position="107"/>
        <end position="127"/>
    </location>
</feature>
<feature type="transmembrane region" description="Helical" evidence="1">
    <location>
        <begin position="132"/>
        <end position="152"/>
    </location>
</feature>
<feature type="transmembrane region" description="Helical" evidence="1">
    <location>
        <begin position="167"/>
        <end position="187"/>
    </location>
</feature>
<feature type="transmembrane region" description="Helical" evidence="1">
    <location>
        <begin position="212"/>
        <end position="232"/>
    </location>
</feature>
<feature type="transmembrane region" description="Helical" evidence="1">
    <location>
        <begin position="244"/>
        <end position="264"/>
    </location>
</feature>
<feature type="transmembrane region" description="Helical" evidence="1">
    <location>
        <begin position="278"/>
        <end position="298"/>
    </location>
</feature>
<feature type="transmembrane region" description="Helical" evidence="1">
    <location>
        <begin position="307"/>
        <end position="327"/>
    </location>
</feature>
<feature type="transmembrane region" description="Helical" evidence="1">
    <location>
        <begin position="333"/>
        <end position="353"/>
    </location>
</feature>
<feature type="transmembrane region" description="Helical" evidence="1">
    <location>
        <begin position="378"/>
        <end position="398"/>
    </location>
</feature>
<feature type="transmembrane region" description="Helical" evidence="1">
    <location>
        <begin position="410"/>
        <end position="430"/>
    </location>
</feature>
<feature type="transmembrane region" description="Helical" evidence="1">
    <location>
        <begin position="466"/>
        <end position="486"/>
    </location>
</feature>